<gene>
    <name evidence="17" type="primary">Kcnip2</name>
    <name evidence="15" type="synonym">Kchip2</name>
</gene>
<dbReference type="EMBL" id="AB040031">
    <property type="protein sequence ID" value="BAA92743.1"/>
    <property type="molecule type" value="mRNA"/>
</dbReference>
<dbReference type="EMBL" id="AB040032">
    <property type="protein sequence ID" value="BAA92744.1"/>
    <property type="molecule type" value="mRNA"/>
</dbReference>
<dbReference type="EMBL" id="AF269283">
    <property type="protein sequence ID" value="AAF81755.1"/>
    <property type="molecule type" value="mRNA"/>
</dbReference>
<dbReference type="EMBL" id="AF269284">
    <property type="protein sequence ID" value="AAF81756.1"/>
    <property type="molecule type" value="mRNA"/>
</dbReference>
<dbReference type="EMBL" id="AF269285">
    <property type="protein sequence ID" value="AAF81757.1"/>
    <property type="molecule type" value="mRNA"/>
</dbReference>
<dbReference type="EMBL" id="BC085905">
    <property type="protein sequence ID" value="AAH85905.1"/>
    <property type="molecule type" value="mRNA"/>
</dbReference>
<dbReference type="PIR" id="JC7631">
    <property type="entry name" value="JC7631"/>
</dbReference>
<dbReference type="RefSeq" id="NP_001029133.1">
    <molecule id="Q9JM59-3"/>
    <property type="nucleotide sequence ID" value="NM_001033961.1"/>
</dbReference>
<dbReference type="RefSeq" id="NP_064479.2">
    <molecule id="Q9JM59-1"/>
    <property type="nucleotide sequence ID" value="NM_020094.2"/>
</dbReference>
<dbReference type="RefSeq" id="NP_064480.2">
    <molecule id="Q9JM59-2"/>
    <property type="nucleotide sequence ID" value="NM_020095.2"/>
</dbReference>
<dbReference type="RefSeq" id="XP_008758701.1">
    <property type="nucleotide sequence ID" value="XM_008760479.2"/>
</dbReference>
<dbReference type="RefSeq" id="XP_008758702.1">
    <property type="nucleotide sequence ID" value="XM_008760480.2"/>
</dbReference>
<dbReference type="RefSeq" id="XP_008758704.1">
    <property type="nucleotide sequence ID" value="XM_008760482.2"/>
</dbReference>
<dbReference type="RefSeq" id="XP_017445315.1">
    <property type="nucleotide sequence ID" value="XM_017589826.1"/>
</dbReference>
<dbReference type="RefSeq" id="XP_017445321.1">
    <property type="nucleotide sequence ID" value="XM_017589832.1"/>
</dbReference>
<dbReference type="RefSeq" id="XP_017445328.1">
    <property type="nucleotide sequence ID" value="XM_017589839.1"/>
</dbReference>
<dbReference type="SMR" id="Q9JM59"/>
<dbReference type="BioGRID" id="248591">
    <property type="interactions" value="2"/>
</dbReference>
<dbReference type="CORUM" id="Q9JM59"/>
<dbReference type="FunCoup" id="Q9JM59">
    <property type="interactions" value="612"/>
</dbReference>
<dbReference type="STRING" id="10116.ENSRNOP00000040277"/>
<dbReference type="iPTMnet" id="Q9JM59"/>
<dbReference type="PhosphoSitePlus" id="Q9JM59"/>
<dbReference type="SwissPalm" id="Q9JM59"/>
<dbReference type="PaxDb" id="10116-ENSRNOP00000059337"/>
<dbReference type="ABCD" id="Q9JM59">
    <property type="antibodies" value="2 sequenced antibodies"/>
</dbReference>
<dbReference type="Ensembl" id="ENSRNOT00000024709.6">
    <molecule id="Q9JM59-1"/>
    <property type="protein sequence ID" value="ENSRNOP00000024709.4"/>
    <property type="gene ID" value="ENSRNOG00000018018.9"/>
</dbReference>
<dbReference type="Ensembl" id="ENSRNOT00000024750.5">
    <molecule id="Q9JM59-3"/>
    <property type="protein sequence ID" value="ENSRNOP00000024750.3"/>
    <property type="gene ID" value="ENSRNOG00000018018.9"/>
</dbReference>
<dbReference type="GeneID" id="56817"/>
<dbReference type="KEGG" id="rno:56817"/>
<dbReference type="UCSC" id="RGD:70887">
    <molecule id="Q9JM59-1"/>
    <property type="organism name" value="rat"/>
</dbReference>
<dbReference type="AGR" id="RGD:70887"/>
<dbReference type="CTD" id="30819"/>
<dbReference type="RGD" id="70887">
    <property type="gene designation" value="Kcnip2"/>
</dbReference>
<dbReference type="VEuPathDB" id="HostDB:ENSRNOG00000014152"/>
<dbReference type="eggNOG" id="KOG0044">
    <property type="taxonomic scope" value="Eukaryota"/>
</dbReference>
<dbReference type="GeneTree" id="ENSGT00940000157798"/>
<dbReference type="HOGENOM" id="CLU_072366_2_2_1"/>
<dbReference type="InParanoid" id="Q9JM59"/>
<dbReference type="OrthoDB" id="191686at2759"/>
<dbReference type="PhylomeDB" id="Q9JM59"/>
<dbReference type="TreeFam" id="TF318560"/>
<dbReference type="Reactome" id="R-RNO-5576894">
    <property type="pathway name" value="Phase 1 - inactivation of fast Na+ channels"/>
</dbReference>
<dbReference type="PRO" id="PR:Q9JM59"/>
<dbReference type="Proteomes" id="UP000002494">
    <property type="component" value="Chromosome 1"/>
</dbReference>
<dbReference type="Bgee" id="ENSRNOG00000018018">
    <property type="expression patterns" value="Expressed in heart and 19 other cell types or tissues"/>
</dbReference>
<dbReference type="ExpressionAtlas" id="Q9JM59">
    <property type="expression patterns" value="baseline and differential"/>
</dbReference>
<dbReference type="GO" id="GO:0005737">
    <property type="term" value="C:cytoplasm"/>
    <property type="evidence" value="ECO:0000266"/>
    <property type="project" value="RGD"/>
</dbReference>
<dbReference type="GO" id="GO:0030425">
    <property type="term" value="C:dendrite"/>
    <property type="evidence" value="ECO:0000314"/>
    <property type="project" value="RGD"/>
</dbReference>
<dbReference type="GO" id="GO:0071193">
    <property type="term" value="C:Kv4.2-KChIP2 channel complex"/>
    <property type="evidence" value="ECO:0000266"/>
    <property type="project" value="RGD"/>
</dbReference>
<dbReference type="GO" id="GO:0005886">
    <property type="term" value="C:plasma membrane"/>
    <property type="evidence" value="ECO:0000314"/>
    <property type="project" value="UniProtKB"/>
</dbReference>
<dbReference type="GO" id="GO:0008076">
    <property type="term" value="C:voltage-gated potassium channel complex"/>
    <property type="evidence" value="ECO:0000314"/>
    <property type="project" value="UniProtKB"/>
</dbReference>
<dbReference type="GO" id="GO:0005250">
    <property type="term" value="F:A-type (transient outward) potassium channel activity"/>
    <property type="evidence" value="ECO:0007669"/>
    <property type="project" value="Ensembl"/>
</dbReference>
<dbReference type="GO" id="GO:0005509">
    <property type="term" value="F:calcium ion binding"/>
    <property type="evidence" value="ECO:0000314"/>
    <property type="project" value="RGD"/>
</dbReference>
<dbReference type="GO" id="GO:0015459">
    <property type="term" value="F:potassium channel regulator activity"/>
    <property type="evidence" value="ECO:0000314"/>
    <property type="project" value="UniProtKB"/>
</dbReference>
<dbReference type="GO" id="GO:0044877">
    <property type="term" value="F:protein-containing complex binding"/>
    <property type="evidence" value="ECO:0000314"/>
    <property type="project" value="RGD"/>
</dbReference>
<dbReference type="GO" id="GO:0044325">
    <property type="term" value="F:transmembrane transporter binding"/>
    <property type="evidence" value="ECO:0000266"/>
    <property type="project" value="RGD"/>
</dbReference>
<dbReference type="GO" id="GO:0001508">
    <property type="term" value="P:action potential"/>
    <property type="evidence" value="ECO:0000266"/>
    <property type="project" value="RGD"/>
</dbReference>
<dbReference type="GO" id="GO:0045163">
    <property type="term" value="P:clustering of voltage-gated potassium channels"/>
    <property type="evidence" value="ECO:0000314"/>
    <property type="project" value="RGD"/>
</dbReference>
<dbReference type="GO" id="GO:0086009">
    <property type="term" value="P:membrane repolarization"/>
    <property type="evidence" value="ECO:0000266"/>
    <property type="project" value="RGD"/>
</dbReference>
<dbReference type="GO" id="GO:0006936">
    <property type="term" value="P:muscle contraction"/>
    <property type="evidence" value="ECO:0000266"/>
    <property type="project" value="RGD"/>
</dbReference>
<dbReference type="GO" id="GO:1903766">
    <property type="term" value="P:positive regulation of potassium ion export across plasma membrane"/>
    <property type="evidence" value="ECO:0000266"/>
    <property type="project" value="RGD"/>
</dbReference>
<dbReference type="GO" id="GO:0060306">
    <property type="term" value="P:regulation of membrane repolarization"/>
    <property type="evidence" value="ECO:0000266"/>
    <property type="project" value="RGD"/>
</dbReference>
<dbReference type="GO" id="GO:1903764">
    <property type="term" value="P:regulation of potassium ion export across plasma membrane"/>
    <property type="evidence" value="ECO:0000266"/>
    <property type="project" value="RGD"/>
</dbReference>
<dbReference type="GO" id="GO:1901379">
    <property type="term" value="P:regulation of potassium ion transmembrane transport"/>
    <property type="evidence" value="ECO:0000314"/>
    <property type="project" value="UniProtKB"/>
</dbReference>
<dbReference type="GO" id="GO:0009966">
    <property type="term" value="P:regulation of signal transduction"/>
    <property type="evidence" value="ECO:0000318"/>
    <property type="project" value="GO_Central"/>
</dbReference>
<dbReference type="CDD" id="cd00051">
    <property type="entry name" value="EFh"/>
    <property type="match status" value="2"/>
</dbReference>
<dbReference type="FunFam" id="1.10.238.10:FF:000043">
    <property type="entry name" value="Kv channel-interacting protein 1 isoform 2"/>
    <property type="match status" value="1"/>
</dbReference>
<dbReference type="Gene3D" id="1.10.238.10">
    <property type="entry name" value="EF-hand"/>
    <property type="match status" value="1"/>
</dbReference>
<dbReference type="InterPro" id="IPR011992">
    <property type="entry name" value="EF-hand-dom_pair"/>
</dbReference>
<dbReference type="InterPro" id="IPR018247">
    <property type="entry name" value="EF_Hand_1_Ca_BS"/>
</dbReference>
<dbReference type="InterPro" id="IPR002048">
    <property type="entry name" value="EF_hand_dom"/>
</dbReference>
<dbReference type="InterPro" id="IPR028846">
    <property type="entry name" value="Recoverin"/>
</dbReference>
<dbReference type="PANTHER" id="PTHR23055">
    <property type="entry name" value="CALCIUM BINDING PROTEINS"/>
    <property type="match status" value="1"/>
</dbReference>
<dbReference type="PANTHER" id="PTHR23055:SF65">
    <property type="entry name" value="KV CHANNEL-INTERACTING PROTEIN 2"/>
    <property type="match status" value="1"/>
</dbReference>
<dbReference type="Pfam" id="PF13499">
    <property type="entry name" value="EF-hand_7"/>
    <property type="match status" value="1"/>
</dbReference>
<dbReference type="Pfam" id="PF13833">
    <property type="entry name" value="EF-hand_8"/>
    <property type="match status" value="1"/>
</dbReference>
<dbReference type="PRINTS" id="PR00450">
    <property type="entry name" value="RECOVERIN"/>
</dbReference>
<dbReference type="SMART" id="SM00054">
    <property type="entry name" value="EFh"/>
    <property type="match status" value="3"/>
</dbReference>
<dbReference type="SUPFAM" id="SSF47473">
    <property type="entry name" value="EF-hand"/>
    <property type="match status" value="1"/>
</dbReference>
<dbReference type="PROSITE" id="PS00018">
    <property type="entry name" value="EF_HAND_1"/>
    <property type="match status" value="3"/>
</dbReference>
<dbReference type="PROSITE" id="PS50222">
    <property type="entry name" value="EF_HAND_2"/>
    <property type="match status" value="3"/>
</dbReference>
<accession>Q9JM59</accession>
<accession>Q9JI21</accession>
<accession>Q9JI22</accession>
<accession>Q9JI23</accession>
<accession>Q9JM60</accession>
<feature type="chain" id="PRO_0000073824" description="A-type potassium channel modulatory protein KCNIP2">
    <location>
        <begin position="1"/>
        <end position="270"/>
    </location>
</feature>
<feature type="domain" description="EF-hand 1; degenerate" evidence="16">
    <location>
        <begin position="81"/>
        <end position="137"/>
    </location>
</feature>
<feature type="domain" description="EF-hand 2" evidence="4">
    <location>
        <begin position="140"/>
        <end position="175"/>
    </location>
</feature>
<feature type="domain" description="EF-hand 3" evidence="4">
    <location>
        <begin position="176"/>
        <end position="211"/>
    </location>
</feature>
<feature type="domain" description="EF-hand 4" evidence="4">
    <location>
        <begin position="224"/>
        <end position="259"/>
    </location>
</feature>
<feature type="region of interest" description="Disordered" evidence="5">
    <location>
        <begin position="1"/>
        <end position="34"/>
    </location>
</feature>
<feature type="region of interest" description="Interaction with KCND2" evidence="1">
    <location>
        <begin position="257"/>
        <end position="270"/>
    </location>
</feature>
<feature type="compositionally biased region" description="Basic and acidic residues" evidence="5">
    <location>
        <begin position="1"/>
        <end position="17"/>
    </location>
</feature>
<feature type="binding site" evidence="4">
    <location>
        <position position="153"/>
    </location>
    <ligand>
        <name>Ca(2+)</name>
        <dbReference type="ChEBI" id="CHEBI:29108"/>
        <label>1</label>
    </ligand>
</feature>
<feature type="binding site" evidence="4">
    <location>
        <position position="155"/>
    </location>
    <ligand>
        <name>Ca(2+)</name>
        <dbReference type="ChEBI" id="CHEBI:29108"/>
        <label>1</label>
    </ligand>
</feature>
<feature type="binding site" evidence="4">
    <location>
        <position position="157"/>
    </location>
    <ligand>
        <name>Ca(2+)</name>
        <dbReference type="ChEBI" id="CHEBI:29108"/>
        <label>1</label>
    </ligand>
</feature>
<feature type="binding site" evidence="4">
    <location>
        <position position="159"/>
    </location>
    <ligand>
        <name>Ca(2+)</name>
        <dbReference type="ChEBI" id="CHEBI:29108"/>
        <label>1</label>
    </ligand>
</feature>
<feature type="binding site" evidence="4">
    <location>
        <position position="164"/>
    </location>
    <ligand>
        <name>Ca(2+)</name>
        <dbReference type="ChEBI" id="CHEBI:29108"/>
        <label>1</label>
    </ligand>
</feature>
<feature type="binding site" evidence="4">
    <location>
        <position position="189"/>
    </location>
    <ligand>
        <name>Ca(2+)</name>
        <dbReference type="ChEBI" id="CHEBI:29108"/>
        <label>2</label>
    </ligand>
</feature>
<feature type="binding site" evidence="4">
    <location>
        <position position="191"/>
    </location>
    <ligand>
        <name>Ca(2+)</name>
        <dbReference type="ChEBI" id="CHEBI:29108"/>
        <label>2</label>
    </ligand>
</feature>
<feature type="binding site" evidence="4">
    <location>
        <position position="193"/>
    </location>
    <ligand>
        <name>Ca(2+)</name>
        <dbReference type="ChEBI" id="CHEBI:29108"/>
        <label>2</label>
    </ligand>
</feature>
<feature type="binding site" evidence="4">
    <location>
        <position position="195"/>
    </location>
    <ligand>
        <name>Ca(2+)</name>
        <dbReference type="ChEBI" id="CHEBI:29108"/>
        <label>2</label>
    </ligand>
</feature>
<feature type="binding site" evidence="4">
    <location>
        <position position="200"/>
    </location>
    <ligand>
        <name>Ca(2+)</name>
        <dbReference type="ChEBI" id="CHEBI:29108"/>
        <label>2</label>
    </ligand>
</feature>
<feature type="binding site" evidence="4">
    <location>
        <position position="237"/>
    </location>
    <ligand>
        <name>Ca(2+)</name>
        <dbReference type="ChEBI" id="CHEBI:29108"/>
        <label>3</label>
    </ligand>
</feature>
<feature type="binding site" evidence="4">
    <location>
        <position position="239"/>
    </location>
    <ligand>
        <name>Ca(2+)</name>
        <dbReference type="ChEBI" id="CHEBI:29108"/>
        <label>3</label>
    </ligand>
</feature>
<feature type="binding site" evidence="4">
    <location>
        <position position="241"/>
    </location>
    <ligand>
        <name>Ca(2+)</name>
        <dbReference type="ChEBI" id="CHEBI:29108"/>
        <label>3</label>
    </ligand>
</feature>
<feature type="binding site" evidence="4">
    <location>
        <position position="248"/>
    </location>
    <ligand>
        <name>Ca(2+)</name>
        <dbReference type="ChEBI" id="CHEBI:29108"/>
        <label>3</label>
    </ligand>
</feature>
<feature type="modified residue" description="Phosphoserine" evidence="18">
    <location>
        <position position="9"/>
    </location>
</feature>
<feature type="lipid moiety-binding region" description="S-palmitoyl cysteine" evidence="8">
    <location>
        <position position="45"/>
    </location>
</feature>
<feature type="lipid moiety-binding region" description="S-palmitoyl cysteine" evidence="8">
    <location>
        <position position="46"/>
    </location>
</feature>
<feature type="splice variant" id="VSP_015064" description="In isoform 3." evidence="12 13 14">
    <location>
        <begin position="25"/>
        <end position="74"/>
    </location>
</feature>
<feature type="splice variant" id="VSP_015065" description="In isoform 2." evidence="13">
    <original>TLAAPASLRPHRPRPLDPD</original>
    <variation>N</variation>
    <location>
        <begin position="57"/>
        <end position="75"/>
    </location>
</feature>
<feature type="mutagenesis site" description="Abolishes plasma membrane localization." evidence="8">
    <original>CC</original>
    <variation>AA</variation>
    <variation>SS</variation>
    <location>
        <begin position="45"/>
        <end position="46"/>
    </location>
</feature>
<feature type="sequence conflict" description="In Ref. 1; BAA92743/BAA92744." evidence="16" ref="1">
    <original>E</original>
    <variation>D</variation>
    <location>
        <position position="12"/>
    </location>
</feature>
<feature type="sequence conflict" description="In Ref. 1; BAA92744 and 3; AAH85905." evidence="16" ref="1 3">
    <original>S</original>
    <variation>T</variation>
    <location>
        <position position="31"/>
    </location>
</feature>
<feature type="sequence conflict" description="In Ref. 1; BAA92744 and 3; AAH85905." evidence="16" ref="1 3">
    <original>A</original>
    <variation>V</variation>
    <location>
        <position position="50"/>
    </location>
</feature>
<feature type="sequence conflict" description="In Ref. 1; BAA92743/BAA92744." evidence="16" ref="1">
    <original>R</original>
    <variation>K</variation>
    <location>
        <position position="105"/>
    </location>
</feature>
<feature type="sequence conflict" description="In Ref. 1; BAA92743/BAA92744." evidence="16" ref="1">
    <original>N</original>
    <variation>T</variation>
    <location>
        <position position="143"/>
    </location>
</feature>
<feature type="sequence conflict" description="In Ref. 1; BAA92743/BAA92744." evidence="16" ref="1">
    <original>I</original>
    <variation>V</variation>
    <location>
        <position position="177"/>
    </location>
</feature>
<feature type="sequence conflict" description="In Ref. 1; BAA92743/BAA92744." evidence="16" ref="1">
    <original>S</original>
    <variation>N</variation>
    <location>
        <position position="182"/>
    </location>
</feature>
<feature type="sequence conflict" description="In Ref. 1; BAA92743/BAA92744." evidence="16" ref="1">
    <original>Q</original>
    <variation>K</variation>
    <location>
        <position position="255"/>
    </location>
</feature>
<sequence length="270" mass="30933">MRGQGRKESLSESRDLDGSYDQLTGHPPGPSKKALKQRFLKLLPCCGPQALPSVSETLAAPASLRPHRPRPLDPDSVEDEFELSTVCHRPEGLEQLQEQTKFTRRELQVLYRGFKNECPSGIVNEENFKQIYSQFFPQGDSSNYATFLFNAFDTNHDGSVSFEDFVAGLSVILRGTIDDRLSWAFNLYDLNKDGCITKEEMLDIMKSIYDMMGKYTYPALREEAPREHVESFFQKMDRNKDGVVTIEEFIESCQQDENIMRSMQLFDNVI</sequence>
<name>KCIP2_RAT</name>
<keyword id="KW-0025">Alternative splicing</keyword>
<keyword id="KW-0106">Calcium</keyword>
<keyword id="KW-1003">Cell membrane</keyword>
<keyword id="KW-0407">Ion channel</keyword>
<keyword id="KW-0406">Ion transport</keyword>
<keyword id="KW-0449">Lipoprotein</keyword>
<keyword id="KW-0472">Membrane</keyword>
<keyword id="KW-0479">Metal-binding</keyword>
<keyword id="KW-0564">Palmitate</keyword>
<keyword id="KW-0597">Phosphoprotein</keyword>
<keyword id="KW-0630">Potassium</keyword>
<keyword id="KW-0631">Potassium channel</keyword>
<keyword id="KW-0633">Potassium transport</keyword>
<keyword id="KW-1185">Reference proteome</keyword>
<keyword id="KW-0677">Repeat</keyword>
<keyword id="KW-0813">Transport</keyword>
<keyword id="KW-0851">Voltage-gated channel</keyword>
<comment type="function">
    <text evidence="2 3 6 10">Regulatory subunit of Kv4/D (Shal)-type voltage-gated rapidly inactivating A-type potassium channels (PubMed:10676964, PubMed:16820361). Modulates channel density, inactivation kinetics and rate of recovery from inactivation in a calcium-dependent and isoform-specific manner (PubMed:10676964, PubMed:16820361). Involved in KCND2 and KCND3 trafficking to the cell surface (By similarity). Essential for the expression of I(To) currents in the heart (By similarity). Required for normal protein levels of KCND2 in the heart ventricle (By similarity).</text>
</comment>
<comment type="subunit">
    <text evidence="2 3 6 7 10">Component of heteromultimeric potassium channels. Identified in potassium channel complexes containing KCND1, KCND2, KCND3, KCNIP1, KCNIP2, KCNIP3, KCNIP4, DPP6 and DPP10 (By similarity). The KCND2-KCNIP2 channel complex contains four KCND2 and four KCNIP2 subunits (By similarity). Interacts with KCND2 (PubMed:16820361). Probably part of a complex consisting of KCNIP1, KCNIP2 isoform 3 and KCND2. At least isoform 2 and isoform 3 can self-associate to form homodimers and homotetramers. Isoform 3 interacts with KCNIP1 in a calcium-dependent manner (By similarity). Interacts with KCND3; each KCNIP2 monomer interacts with two adjacent KCND3 subunits, through both the N-terminal inactivation ball of a KCND3 subunit and a C-terminal helix from the adjacent KCND3 subunit, clamping them together; this interaction modulates the channel gating kinetics (PubMed:10676964, PubMed:11263977).</text>
</comment>
<comment type="subcellular location">
    <subcellularLocation>
        <location evidence="7 8 10 11">Cell membrane</location>
        <topology evidence="8">Lipid-anchor</topology>
    </subcellularLocation>
    <text evidence="11">Detected on lipid rafts.</text>
</comment>
<comment type="alternative products">
    <event type="alternative splicing"/>
    <isoform>
        <id>Q9JM59-1</id>
        <name>1</name>
        <name>B</name>
        <name>KCHIP2a</name>
        <name>KChIP2L</name>
        <name>rKCHIP2b</name>
        <sequence type="displayed"/>
    </isoform>
    <isoform>
        <id>Q9JM59-2</id>
        <name>2</name>
        <name>KCHIP2b</name>
        <sequence type="described" ref="VSP_015065"/>
    </isoform>
    <isoform>
        <id>Q9JM59-3</id>
        <name>3</name>
        <name>rKCHIP2a</name>
        <name>KCHIP2L</name>
        <sequence type="described" ref="VSP_015064"/>
    </isoform>
</comment>
<comment type="tissue specificity">
    <text evidence="6 7 8 9">Expressed in heart, brain and lung. In brain, abundantly expressed in striatum, hippocampus and olfactory bulb, moderately expressed in cerebral cortex and lowly expressed in thalamus and hypothalamus. Isoform 1 is predominant in cerebral cortex, striatum and hippocampus. Isoform 1, isoform 2 and isoform 3 are equally expressed in olfactory bulb. Iisoform 3 is expressed at high levels and isoform 1 at low levels in heart (in PubMed:11263977).</text>
</comment>
<comment type="PTM">
    <text evidence="8">Palmitoylated. Palmitoylation enhances association with the plasma membrane.</text>
</comment>
<comment type="similarity">
    <text evidence="16">Belongs to the recoverin family.</text>
</comment>
<reference key="1">
    <citation type="journal article" date="2001" name="Biochem. Biophys. Res. Commun.">
        <title>Molecular cloning and expression of the novel splice variants of K(+) channel-interacting protein 2.</title>
        <authorList>
            <person name="Ohya S."/>
            <person name="Morohashi Y."/>
            <person name="Muraki K."/>
            <person name="Tomita T."/>
            <person name="Watanabe M."/>
            <person name="Iwatsubo T."/>
            <person name="Imaizumi Y."/>
        </authorList>
    </citation>
    <scope>NUCLEOTIDE SEQUENCE [MRNA] (ISOFORMS 1 AND 3)</scope>
    <scope>INTERACTION WITH KCND3</scope>
    <scope>TISSUE SPECIFICITY</scope>
    <scope>SUBCELLULAR LOCATION</scope>
    <source>
        <tissue>Brain</tissue>
    </source>
</reference>
<reference key="2">
    <citation type="journal article" date="2002" name="J. Biol. Chem.">
        <title>Palmitoylation of KChIP splicing variants is required for efficient cell surface expression of Kv4.3 channels.</title>
        <authorList>
            <person name="Takimoto K."/>
            <person name="Yang E.-K."/>
            <person name="Conforti L."/>
        </authorList>
    </citation>
    <scope>NUCLEOTIDE SEQUENCE [MRNA] (ISOFORMS 1; 2 AND 3)</scope>
    <scope>SUBCELLULAR LOCATION</scope>
    <scope>TISSUE SPECIFICITY</scope>
    <scope>PALMITOYLATION AT CYS-45 AND CYS-46</scope>
    <scope>MUTAGENESIS OF 45-CYS-CYS-46</scope>
    <source>
        <strain>Sprague-Dawley</strain>
    </source>
</reference>
<reference key="3">
    <citation type="journal article" date="2004" name="Genome Res.">
        <title>The status, quality, and expansion of the NIH full-length cDNA project: the Mammalian Gene Collection (MGC).</title>
        <authorList>
            <consortium name="The MGC Project Team"/>
        </authorList>
    </citation>
    <scope>NUCLEOTIDE SEQUENCE [LARGE SCALE MRNA] (ISOFORM 3)</scope>
    <source>
        <tissue>Heart</tissue>
    </source>
</reference>
<reference key="4">
    <citation type="journal article" date="2000" name="Nature">
        <title>Modulation of A-type potassium channels by a family of calcium sensors.</title>
        <authorList>
            <person name="An W.F."/>
            <person name="Bowlby M.R."/>
            <person name="Betty M."/>
            <person name="Cao J."/>
            <person name="Ling H.-P."/>
            <person name="Mendoza G."/>
            <person name="Hinson J.W."/>
            <person name="Mattsson K.I."/>
            <person name="Strassle B.W."/>
            <person name="Trimmer J.S."/>
            <person name="Rhodes K.J."/>
        </authorList>
    </citation>
    <scope>FUNCTION</scope>
    <scope>INTERACTION WITH KCND2 AND KCND3</scope>
    <scope>TISSUE SPECIFICITY</scope>
</reference>
<reference key="5">
    <citation type="journal article" date="2003" name="Am. J. Physiol.">
        <title>Functional properties of a brain-specific NH2-terminally spliced modulator of Kv4 channels.</title>
        <authorList>
            <person name="Boland L.M."/>
            <person name="Jiang M."/>
            <person name="Lee S.Y."/>
            <person name="Fahrenkrug S.C."/>
            <person name="Harnett M.T."/>
            <person name="O'Grady S.M."/>
        </authorList>
    </citation>
    <scope>TISSUE SPECIFICITY</scope>
</reference>
<reference key="6">
    <citation type="journal article" date="2006" name="J. Biol. Chem.">
        <title>C-terminal domain of Kv4.2 and associated KChIP2 interactions regulate functional expression and gating of Kv4.2.</title>
        <authorList>
            <person name="Han W."/>
            <person name="Nattel S."/>
            <person name="Noguchi T."/>
            <person name="Shrier A."/>
        </authorList>
    </citation>
    <scope>FUNCTION</scope>
    <scope>INTERACTION WITH KCND2</scope>
    <scope>SUBCELLULAR LOCATION</scope>
</reference>
<reference key="7">
    <citation type="journal article" date="2012" name="Nat. Commun.">
        <title>Quantitative maps of protein phosphorylation sites across 14 different rat organs and tissues.</title>
        <authorList>
            <person name="Lundby A."/>
            <person name="Secher A."/>
            <person name="Lage K."/>
            <person name="Nordsborg N.B."/>
            <person name="Dmytriyev A."/>
            <person name="Lundby C."/>
            <person name="Olsen J.V."/>
        </authorList>
    </citation>
    <scope>PHOSPHORYLATION [LARGE SCALE ANALYSIS] AT SER-9</scope>
    <scope>IDENTIFICATION BY MASS SPECTROMETRY [LARGE SCALE ANALYSIS]</scope>
</reference>
<reference key="8">
    <citation type="journal article" date="2015" name="Pflugers Arch.">
        <title>Localization of Kv4.2 and KChIP2 in lipid rafts and modulation of outward K(+) currents by membrane cholesterol content in rat left ventricular myocytes.</title>
        <authorList>
            <person name="Rudakova E."/>
            <person name="Wagner M."/>
            <person name="Frank M."/>
            <person name="Volk T."/>
        </authorList>
    </citation>
    <scope>SUBCELLULAR LOCATION</scope>
</reference>
<proteinExistence type="evidence at protein level"/>
<protein>
    <recommendedName>
        <fullName evidence="16">A-type potassium channel modulatory protein KCNIP2</fullName>
    </recommendedName>
    <alternativeName>
        <fullName>Kv channel-interacting protein 2</fullName>
        <shortName evidence="15">KChIP2</shortName>
    </alternativeName>
    <alternativeName>
        <fullName>Potassium channel-interacting protein 2</fullName>
    </alternativeName>
</protein>
<organism>
    <name type="scientific">Rattus norvegicus</name>
    <name type="common">Rat</name>
    <dbReference type="NCBI Taxonomy" id="10116"/>
    <lineage>
        <taxon>Eukaryota</taxon>
        <taxon>Metazoa</taxon>
        <taxon>Chordata</taxon>
        <taxon>Craniata</taxon>
        <taxon>Vertebrata</taxon>
        <taxon>Euteleostomi</taxon>
        <taxon>Mammalia</taxon>
        <taxon>Eutheria</taxon>
        <taxon>Euarchontoglires</taxon>
        <taxon>Glires</taxon>
        <taxon>Rodentia</taxon>
        <taxon>Myomorpha</taxon>
        <taxon>Muroidea</taxon>
        <taxon>Muridae</taxon>
        <taxon>Murinae</taxon>
        <taxon>Rattus</taxon>
    </lineage>
</organism>
<evidence type="ECO:0000250" key="1">
    <source>
        <dbReference type="UniProtKB" id="Q8R426"/>
    </source>
</evidence>
<evidence type="ECO:0000250" key="2">
    <source>
        <dbReference type="UniProtKB" id="Q9JJ69"/>
    </source>
</evidence>
<evidence type="ECO:0000250" key="3">
    <source>
        <dbReference type="UniProtKB" id="Q9NS61"/>
    </source>
</evidence>
<evidence type="ECO:0000255" key="4">
    <source>
        <dbReference type="PROSITE-ProRule" id="PRU00448"/>
    </source>
</evidence>
<evidence type="ECO:0000256" key="5">
    <source>
        <dbReference type="SAM" id="MobiDB-lite"/>
    </source>
</evidence>
<evidence type="ECO:0000269" key="6">
    <source>
    </source>
</evidence>
<evidence type="ECO:0000269" key="7">
    <source>
    </source>
</evidence>
<evidence type="ECO:0000269" key="8">
    <source>
    </source>
</evidence>
<evidence type="ECO:0000269" key="9">
    <source>
    </source>
</evidence>
<evidence type="ECO:0000269" key="10">
    <source>
    </source>
</evidence>
<evidence type="ECO:0000269" key="11">
    <source>
    </source>
</evidence>
<evidence type="ECO:0000303" key="12">
    <source>
    </source>
</evidence>
<evidence type="ECO:0000303" key="13">
    <source>
    </source>
</evidence>
<evidence type="ECO:0000303" key="14">
    <source>
    </source>
</evidence>
<evidence type="ECO:0000303" key="15">
    <source>
    </source>
</evidence>
<evidence type="ECO:0000305" key="16"/>
<evidence type="ECO:0000312" key="17">
    <source>
        <dbReference type="RGD" id="70887"/>
    </source>
</evidence>
<evidence type="ECO:0007744" key="18">
    <source>
    </source>
</evidence>